<dbReference type="EMBL" id="BC082618">
    <property type="protein sequence ID" value="AAH82618.1"/>
    <property type="molecule type" value="mRNA"/>
</dbReference>
<dbReference type="RefSeq" id="NP_001087967.1">
    <property type="nucleotide sequence ID" value="NM_001094498.1"/>
</dbReference>
<dbReference type="SMR" id="Q640K6"/>
<dbReference type="DNASU" id="494650"/>
<dbReference type="GeneID" id="494650"/>
<dbReference type="KEGG" id="xla:494650"/>
<dbReference type="AGR" id="Xenbase:XB-GENE-6255615"/>
<dbReference type="CTD" id="494650"/>
<dbReference type="Xenbase" id="XB-GENE-6255615">
    <property type="gene designation" value="dpysl3.L"/>
</dbReference>
<dbReference type="OrthoDB" id="10258955at2759"/>
<dbReference type="Proteomes" id="UP000186698">
    <property type="component" value="Chromosome 3L"/>
</dbReference>
<dbReference type="Bgee" id="494650">
    <property type="expression patterns" value="Expressed in heart and 16 other cell types or tissues"/>
</dbReference>
<dbReference type="GO" id="GO:0005829">
    <property type="term" value="C:cytosol"/>
    <property type="evidence" value="ECO:0000318"/>
    <property type="project" value="GO_Central"/>
</dbReference>
<dbReference type="GO" id="GO:0030426">
    <property type="term" value="C:growth cone"/>
    <property type="evidence" value="ECO:0007669"/>
    <property type="project" value="UniProtKB-SubCell"/>
</dbReference>
<dbReference type="GO" id="GO:0016812">
    <property type="term" value="F:hydrolase activity, acting on carbon-nitrogen (but not peptide) bonds, in cyclic amides"/>
    <property type="evidence" value="ECO:0000318"/>
    <property type="project" value="GO_Central"/>
</dbReference>
<dbReference type="GO" id="GO:0051764">
    <property type="term" value="P:actin crosslink formation"/>
    <property type="evidence" value="ECO:0000318"/>
    <property type="project" value="GO_Central"/>
</dbReference>
<dbReference type="CDD" id="cd01314">
    <property type="entry name" value="D-HYD"/>
    <property type="match status" value="1"/>
</dbReference>
<dbReference type="FunFam" id="2.30.40.10:FF:000021">
    <property type="entry name" value="Dihydropyrimidinase-related protein 2"/>
    <property type="match status" value="1"/>
</dbReference>
<dbReference type="FunFam" id="3.20.20.140:FF:000174">
    <property type="entry name" value="Dihydropyrimidinase-related protein 2"/>
    <property type="match status" value="1"/>
</dbReference>
<dbReference type="Gene3D" id="3.20.20.140">
    <property type="entry name" value="Metal-dependent hydrolases"/>
    <property type="match status" value="1"/>
</dbReference>
<dbReference type="Gene3D" id="2.30.40.10">
    <property type="entry name" value="Urease, subunit C, domain 1"/>
    <property type="match status" value="1"/>
</dbReference>
<dbReference type="InterPro" id="IPR006680">
    <property type="entry name" value="Amidohydro-rel"/>
</dbReference>
<dbReference type="InterPro" id="IPR011778">
    <property type="entry name" value="Hydantoinase/dihydroPyrase"/>
</dbReference>
<dbReference type="InterPro" id="IPR011059">
    <property type="entry name" value="Metal-dep_hydrolase_composite"/>
</dbReference>
<dbReference type="InterPro" id="IPR032466">
    <property type="entry name" value="Metal_Hydrolase"/>
</dbReference>
<dbReference type="InterPro" id="IPR050378">
    <property type="entry name" value="Metallo-dep_Hydrolases_sf"/>
</dbReference>
<dbReference type="NCBIfam" id="TIGR02033">
    <property type="entry name" value="D-hydantoinase"/>
    <property type="match status" value="1"/>
</dbReference>
<dbReference type="PANTHER" id="PTHR11647:SF57">
    <property type="entry name" value="DIHYDROPYRIMIDINASE-RELATED PROTEIN 3"/>
    <property type="match status" value="1"/>
</dbReference>
<dbReference type="PANTHER" id="PTHR11647">
    <property type="entry name" value="HYDRANTOINASE/DIHYDROPYRIMIDINASE FAMILY MEMBER"/>
    <property type="match status" value="1"/>
</dbReference>
<dbReference type="Pfam" id="PF01979">
    <property type="entry name" value="Amidohydro_1"/>
    <property type="match status" value="1"/>
</dbReference>
<dbReference type="SUPFAM" id="SSF51338">
    <property type="entry name" value="Composite domain of metallo-dependent hydrolases"/>
    <property type="match status" value="2"/>
</dbReference>
<dbReference type="SUPFAM" id="SSF51556">
    <property type="entry name" value="Metallo-dependent hydrolases"/>
    <property type="match status" value="1"/>
</dbReference>
<gene>
    <name type="primary">dpysl3-b</name>
    <name evidence="4" type="synonym">crmp4</name>
</gene>
<proteinExistence type="evidence at transcript level"/>
<keyword id="KW-0966">Cell projection</keyword>
<keyword id="KW-0963">Cytoplasm</keyword>
<keyword id="KW-1185">Reference proteome</keyword>
<name>DPY3B_XENLA</name>
<comment type="function">
    <text evidence="1">Necessary for signaling by class 3 semaphorins and subsequent remodeling of the cytoskeleton. Plays a role in axon guidance, neuronal growth cone collapse and cell migration (By similarity).</text>
</comment>
<comment type="subunit">
    <text evidence="1">Homotetramer and heterotetramer.</text>
</comment>
<comment type="subcellular location">
    <subcellularLocation>
        <location evidence="1">Cytoplasm</location>
    </subcellularLocation>
    <subcellularLocation>
        <location evidence="1">Cell projection</location>
        <location evidence="1">Growth cone</location>
    </subcellularLocation>
</comment>
<comment type="tissue specificity">
    <text evidence="3">Expressed in the prospective neuroectoderm at the end of gastrulation. During open neural plate stages, expressed broadly throughout the anterior neural plate and in the three bilateral stripes of the posterior neural plate where primary neurons arise. At tadpole stages, expression is maintained throughout the central nervous system and in the eye retina.</text>
</comment>
<comment type="developmental stage">
    <text evidence="3">Expressed zygotically from the end of gastrulation. Expression increases during neurula stages and is maintained at a constant level throughout tailbud stages and later development.</text>
</comment>
<comment type="induction">
    <text evidence="3">By the neuronal determination factor neurog2/X-ngngr-1. Repressed by Notch signaling.</text>
</comment>
<comment type="similarity">
    <text evidence="5">Belongs to the metallo-dependent hydrolases superfamily. Hydantoinase/dihydropyrimidinase family.</text>
</comment>
<comment type="caution">
    <text evidence="5">Lacks most of the conserved residues that are essential for binding the metal cofactor and hence for dihydropyrimidinase activity. Its enzyme activity is therefore unsure.</text>
</comment>
<accession>Q640K6</accession>
<sequence>MSYQGKKNIPRITSDRLLIKGGRIVNDDQSFYADIYMEDGLIKQIGDNLIVPGGVKTIEANGKMVIPGGIDVHTHLQMPYRGMTTVDDFFQGTKAALAGGTTMIVDHVIPEPEASLTEALEKWREWADGKTCCDYSLHVDITHWSDSVKQEVETLVKQKGVNSFMVYMAYKDMYQMSNTELYEIFTFLGGLGAIAQVHAENGDIIAQEQNRMLELGITGPEGHVLSRPEELEAEAVFRAITIASQTNCPLYVTKVMSKSSVDLISQARKKGYVVFGEPITASLGTDGTHYWSKNWAKAAAFVTSPPLSPDPTTPDYINSLLASGDLQVTGSAHATFSTAQKAIGKDNFTLIPEGTNGIEERMSVIWDKSVATGKMDENQFVAVTSTNAAKIFNLYPRKGRIAVGSDSDLVIWDPDAVKIVSAKSHHSAAEYNIFEGMELRGAPLVVICQGKIMMEDGTLHATQGTGRFIPCSPFPDYVYKRIKARTKMAELHAVPRGMYDGPVHDLASTPKAGTPAGSTKGSPTKQTAPVRNLHHSGFSLIGNQADESGVRSASRRIVAPPGGRSNITSLS</sequence>
<feature type="chain" id="PRO_0000382236" description="Dihydropyrimidinase-related protein 3-B">
    <location>
        <begin position="1"/>
        <end position="571"/>
    </location>
</feature>
<feature type="region of interest" description="Disordered" evidence="2">
    <location>
        <begin position="502"/>
        <end position="530"/>
    </location>
</feature>
<feature type="region of interest" description="Disordered" evidence="2">
    <location>
        <begin position="542"/>
        <end position="571"/>
    </location>
</feature>
<feature type="compositionally biased region" description="Polar residues" evidence="2">
    <location>
        <begin position="516"/>
        <end position="529"/>
    </location>
</feature>
<evidence type="ECO:0000250" key="1">
    <source>
        <dbReference type="UniProtKB" id="Q62952"/>
    </source>
</evidence>
<evidence type="ECO:0000256" key="2">
    <source>
        <dbReference type="SAM" id="MobiDB-lite"/>
    </source>
</evidence>
<evidence type="ECO:0000269" key="3">
    <source>
    </source>
</evidence>
<evidence type="ECO:0000303" key="4">
    <source>
    </source>
</evidence>
<evidence type="ECO:0000305" key="5"/>
<evidence type="ECO:0000312" key="6">
    <source>
        <dbReference type="EMBL" id="AAH82618.1"/>
    </source>
</evidence>
<protein>
    <recommendedName>
        <fullName>Dihydropyrimidinase-related protein 3-B</fullName>
        <shortName>DRP-3-B</shortName>
    </recommendedName>
    <alternativeName>
        <fullName evidence="4">Collapsin response mediator protein 4</fullName>
        <shortName evidence="4">CRMP-4</shortName>
        <shortName evidence="4">xCRMP4</shortName>
    </alternativeName>
</protein>
<reference evidence="6" key="1">
    <citation type="submission" date="2004-09" db="EMBL/GenBank/DDBJ databases">
        <authorList>
            <consortium name="NIH - Xenopus Gene Collection (XGC) project"/>
        </authorList>
    </citation>
    <scope>NUCLEOTIDE SEQUENCE [LARGE SCALE MRNA]</scope>
    <source>
        <tissue evidence="6">Heart</tissue>
    </source>
</reference>
<reference evidence="5" key="2">
    <citation type="journal article" date="2007" name="Int. J. Dev. Biol.">
        <title>Expression and regulation of Xenopus CRMP-4 in the developing nervous system.</title>
        <authorList>
            <person name="Souopgui J."/>
            <person name="Klisch T.J."/>
            <person name="Pieler T."/>
            <person name="Henningfeld K.A."/>
        </authorList>
    </citation>
    <scope>TISSUE SPECIFICITY</scope>
    <scope>DEVELOPMENTAL STAGE</scope>
    <scope>INDUCTION</scope>
</reference>
<organism>
    <name type="scientific">Xenopus laevis</name>
    <name type="common">African clawed frog</name>
    <dbReference type="NCBI Taxonomy" id="8355"/>
    <lineage>
        <taxon>Eukaryota</taxon>
        <taxon>Metazoa</taxon>
        <taxon>Chordata</taxon>
        <taxon>Craniata</taxon>
        <taxon>Vertebrata</taxon>
        <taxon>Euteleostomi</taxon>
        <taxon>Amphibia</taxon>
        <taxon>Batrachia</taxon>
        <taxon>Anura</taxon>
        <taxon>Pipoidea</taxon>
        <taxon>Pipidae</taxon>
        <taxon>Xenopodinae</taxon>
        <taxon>Xenopus</taxon>
        <taxon>Xenopus</taxon>
    </lineage>
</organism>